<feature type="chain" id="PRO_1000058850" description="Adenylate kinase">
    <location>
        <begin position="1"/>
        <end position="188"/>
    </location>
</feature>
<feature type="region of interest" description="NMP" evidence="1">
    <location>
        <begin position="30"/>
        <end position="59"/>
    </location>
</feature>
<feature type="region of interest" description="LID" evidence="1">
    <location>
        <begin position="126"/>
        <end position="136"/>
    </location>
</feature>
<feature type="binding site" evidence="1">
    <location>
        <begin position="10"/>
        <end position="15"/>
    </location>
    <ligand>
        <name>ATP</name>
        <dbReference type="ChEBI" id="CHEBI:30616"/>
    </ligand>
</feature>
<feature type="binding site" evidence="1">
    <location>
        <position position="31"/>
    </location>
    <ligand>
        <name>AMP</name>
        <dbReference type="ChEBI" id="CHEBI:456215"/>
    </ligand>
</feature>
<feature type="binding site" evidence="1">
    <location>
        <position position="36"/>
    </location>
    <ligand>
        <name>AMP</name>
        <dbReference type="ChEBI" id="CHEBI:456215"/>
    </ligand>
</feature>
<feature type="binding site" evidence="1">
    <location>
        <begin position="57"/>
        <end position="59"/>
    </location>
    <ligand>
        <name>AMP</name>
        <dbReference type="ChEBI" id="CHEBI:456215"/>
    </ligand>
</feature>
<feature type="binding site" evidence="1">
    <location>
        <begin position="85"/>
        <end position="88"/>
    </location>
    <ligand>
        <name>AMP</name>
        <dbReference type="ChEBI" id="CHEBI:456215"/>
    </ligand>
</feature>
<feature type="binding site" evidence="1">
    <location>
        <position position="92"/>
    </location>
    <ligand>
        <name>AMP</name>
        <dbReference type="ChEBI" id="CHEBI:456215"/>
    </ligand>
</feature>
<feature type="binding site" evidence="1">
    <location>
        <position position="127"/>
    </location>
    <ligand>
        <name>ATP</name>
        <dbReference type="ChEBI" id="CHEBI:30616"/>
    </ligand>
</feature>
<feature type="binding site" evidence="1">
    <location>
        <position position="133"/>
    </location>
    <ligand>
        <name>AMP</name>
        <dbReference type="ChEBI" id="CHEBI:456215"/>
    </ligand>
</feature>
<feature type="binding site" evidence="1">
    <location>
        <position position="144"/>
    </location>
    <ligand>
        <name>AMP</name>
        <dbReference type="ChEBI" id="CHEBI:456215"/>
    </ligand>
</feature>
<feature type="binding site" evidence="1">
    <location>
        <position position="172"/>
    </location>
    <ligand>
        <name>ATP</name>
        <dbReference type="ChEBI" id="CHEBI:30616"/>
    </ligand>
</feature>
<accession>Q0ANS1</accession>
<gene>
    <name evidence="1" type="primary">adk</name>
    <name type="ordered locus">Mmar10_1774</name>
</gene>
<proteinExistence type="inferred from homology"/>
<dbReference type="EC" id="2.7.4.3" evidence="1"/>
<dbReference type="EMBL" id="CP000449">
    <property type="protein sequence ID" value="ABI66066.1"/>
    <property type="molecule type" value="Genomic_DNA"/>
</dbReference>
<dbReference type="RefSeq" id="WP_011643712.1">
    <property type="nucleotide sequence ID" value="NC_008347.1"/>
</dbReference>
<dbReference type="SMR" id="Q0ANS1"/>
<dbReference type="STRING" id="394221.Mmar10_1774"/>
<dbReference type="KEGG" id="mmr:Mmar10_1774"/>
<dbReference type="eggNOG" id="COG0563">
    <property type="taxonomic scope" value="Bacteria"/>
</dbReference>
<dbReference type="HOGENOM" id="CLU_032354_4_1_5"/>
<dbReference type="OrthoDB" id="9805030at2"/>
<dbReference type="UniPathway" id="UPA00588">
    <property type="reaction ID" value="UER00649"/>
</dbReference>
<dbReference type="Proteomes" id="UP000001964">
    <property type="component" value="Chromosome"/>
</dbReference>
<dbReference type="GO" id="GO:0005737">
    <property type="term" value="C:cytoplasm"/>
    <property type="evidence" value="ECO:0007669"/>
    <property type="project" value="UniProtKB-SubCell"/>
</dbReference>
<dbReference type="GO" id="GO:0004017">
    <property type="term" value="F:adenylate kinase activity"/>
    <property type="evidence" value="ECO:0007669"/>
    <property type="project" value="UniProtKB-UniRule"/>
</dbReference>
<dbReference type="GO" id="GO:0005524">
    <property type="term" value="F:ATP binding"/>
    <property type="evidence" value="ECO:0007669"/>
    <property type="project" value="UniProtKB-UniRule"/>
</dbReference>
<dbReference type="GO" id="GO:0044209">
    <property type="term" value="P:AMP salvage"/>
    <property type="evidence" value="ECO:0007669"/>
    <property type="project" value="UniProtKB-UniRule"/>
</dbReference>
<dbReference type="CDD" id="cd01428">
    <property type="entry name" value="ADK"/>
    <property type="match status" value="1"/>
</dbReference>
<dbReference type="Gene3D" id="3.40.50.300">
    <property type="entry name" value="P-loop containing nucleotide triphosphate hydrolases"/>
    <property type="match status" value="1"/>
</dbReference>
<dbReference type="HAMAP" id="MF_00235">
    <property type="entry name" value="Adenylate_kinase_Adk"/>
    <property type="match status" value="1"/>
</dbReference>
<dbReference type="InterPro" id="IPR000850">
    <property type="entry name" value="Adenylat/UMP-CMP_kin"/>
</dbReference>
<dbReference type="InterPro" id="IPR033690">
    <property type="entry name" value="Adenylat_kinase_CS"/>
</dbReference>
<dbReference type="InterPro" id="IPR027417">
    <property type="entry name" value="P-loop_NTPase"/>
</dbReference>
<dbReference type="NCBIfam" id="NF001381">
    <property type="entry name" value="PRK00279.1-3"/>
    <property type="match status" value="1"/>
</dbReference>
<dbReference type="NCBIfam" id="NF011100">
    <property type="entry name" value="PRK14527.1"/>
    <property type="match status" value="1"/>
</dbReference>
<dbReference type="NCBIfam" id="NF011104">
    <property type="entry name" value="PRK14531.1"/>
    <property type="match status" value="1"/>
</dbReference>
<dbReference type="NCBIfam" id="NF011105">
    <property type="entry name" value="PRK14532.1"/>
    <property type="match status" value="1"/>
</dbReference>
<dbReference type="PANTHER" id="PTHR23359">
    <property type="entry name" value="NUCLEOTIDE KINASE"/>
    <property type="match status" value="1"/>
</dbReference>
<dbReference type="Pfam" id="PF00406">
    <property type="entry name" value="ADK"/>
    <property type="match status" value="1"/>
</dbReference>
<dbReference type="PRINTS" id="PR00094">
    <property type="entry name" value="ADENYLTKNASE"/>
</dbReference>
<dbReference type="SUPFAM" id="SSF52540">
    <property type="entry name" value="P-loop containing nucleoside triphosphate hydrolases"/>
    <property type="match status" value="1"/>
</dbReference>
<dbReference type="PROSITE" id="PS00113">
    <property type="entry name" value="ADENYLATE_KINASE"/>
    <property type="match status" value="1"/>
</dbReference>
<organism>
    <name type="scientific">Maricaulis maris (strain MCS10)</name>
    <name type="common">Caulobacter maris</name>
    <dbReference type="NCBI Taxonomy" id="394221"/>
    <lineage>
        <taxon>Bacteria</taxon>
        <taxon>Pseudomonadati</taxon>
        <taxon>Pseudomonadota</taxon>
        <taxon>Alphaproteobacteria</taxon>
        <taxon>Maricaulales</taxon>
        <taxon>Maricaulaceae</taxon>
        <taxon>Maricaulis</taxon>
    </lineage>
</organism>
<protein>
    <recommendedName>
        <fullName evidence="1">Adenylate kinase</fullName>
        <shortName evidence="1">AK</shortName>
        <ecNumber evidence="1">2.7.4.3</ecNumber>
    </recommendedName>
    <alternativeName>
        <fullName evidence="1">ATP-AMP transphosphorylase</fullName>
    </alternativeName>
    <alternativeName>
        <fullName evidence="1">ATP:AMP phosphotransferase</fullName>
    </alternativeName>
    <alternativeName>
        <fullName evidence="1">Adenylate monophosphate kinase</fullName>
    </alternativeName>
</protein>
<comment type="function">
    <text evidence="1">Catalyzes the reversible transfer of the terminal phosphate group between ATP and AMP. Plays an important role in cellular energy homeostasis and in adenine nucleotide metabolism.</text>
</comment>
<comment type="catalytic activity">
    <reaction evidence="1">
        <text>AMP + ATP = 2 ADP</text>
        <dbReference type="Rhea" id="RHEA:12973"/>
        <dbReference type="ChEBI" id="CHEBI:30616"/>
        <dbReference type="ChEBI" id="CHEBI:456215"/>
        <dbReference type="ChEBI" id="CHEBI:456216"/>
        <dbReference type="EC" id="2.7.4.3"/>
    </reaction>
</comment>
<comment type="pathway">
    <text evidence="1">Purine metabolism; AMP biosynthesis via salvage pathway; AMP from ADP: step 1/1.</text>
</comment>
<comment type="subunit">
    <text evidence="1">Monomer.</text>
</comment>
<comment type="subcellular location">
    <subcellularLocation>
        <location evidence="1">Cytoplasm</location>
    </subcellularLocation>
</comment>
<comment type="domain">
    <text evidence="1">Consists of three domains, a large central CORE domain and two small peripheral domains, NMPbind and LID, which undergo movements during catalysis. The LID domain closes over the site of phosphoryl transfer upon ATP binding. Assembling and dissambling the active center during each catalytic cycle provides an effective means to prevent ATP hydrolysis.</text>
</comment>
<comment type="similarity">
    <text evidence="1">Belongs to the adenylate kinase family.</text>
</comment>
<reference key="1">
    <citation type="submission" date="2006-08" db="EMBL/GenBank/DDBJ databases">
        <title>Complete sequence of Maricaulis maris MCS10.</title>
        <authorList>
            <consortium name="US DOE Joint Genome Institute"/>
            <person name="Copeland A."/>
            <person name="Lucas S."/>
            <person name="Lapidus A."/>
            <person name="Barry K."/>
            <person name="Detter J.C."/>
            <person name="Glavina del Rio T."/>
            <person name="Hammon N."/>
            <person name="Israni S."/>
            <person name="Dalin E."/>
            <person name="Tice H."/>
            <person name="Pitluck S."/>
            <person name="Saunders E."/>
            <person name="Brettin T."/>
            <person name="Bruce D."/>
            <person name="Han C."/>
            <person name="Tapia R."/>
            <person name="Gilna P."/>
            <person name="Schmutz J."/>
            <person name="Larimer F."/>
            <person name="Land M."/>
            <person name="Hauser L."/>
            <person name="Kyrpides N."/>
            <person name="Mikhailova N."/>
            <person name="Viollier P."/>
            <person name="Stephens C."/>
            <person name="Richardson P."/>
        </authorList>
    </citation>
    <scope>NUCLEOTIDE SEQUENCE [LARGE SCALE GENOMIC DNA]</scope>
    <source>
        <strain>MCS10</strain>
    </source>
</reference>
<keyword id="KW-0067">ATP-binding</keyword>
<keyword id="KW-0963">Cytoplasm</keyword>
<keyword id="KW-0418">Kinase</keyword>
<keyword id="KW-0545">Nucleotide biosynthesis</keyword>
<keyword id="KW-0547">Nucleotide-binding</keyword>
<keyword id="KW-1185">Reference proteome</keyword>
<keyword id="KW-0808">Transferase</keyword>
<evidence type="ECO:0000255" key="1">
    <source>
        <dbReference type="HAMAP-Rule" id="MF_00235"/>
    </source>
</evidence>
<name>KAD_MARMM</name>
<sequence>MNIVLFGPPGCGKGTQSKRLVAERGWVQLSTGDMLRHARAAGTELGRRVAAIMDGGNLVSDAIVIELIEERLPEAKAAGGAIFDGFPRTVAQAQALDQLLLDRGTQVDSVIELKVNDEELVQRLVKRAEEEGRPDDTEDVIRKRLEVYYGQTAPLIPFFAQQGKVKAVDGMGSMDEVAAGIAAALEEK</sequence>